<name>DNAA_THESQ</name>
<reference key="1">
    <citation type="journal article" date="2011" name="J. Bacteriol.">
        <title>Genome sequence of Thermotoga sp. strain RQ2, a hyperthermophilic bacterium isolated from a geothermally heated region of the seafloor near Ribeira Quente, the Azores.</title>
        <authorList>
            <person name="Swithers K.S."/>
            <person name="DiPippo J.L."/>
            <person name="Bruce D.C."/>
            <person name="Detter C."/>
            <person name="Tapia R."/>
            <person name="Han S."/>
            <person name="Saunders E."/>
            <person name="Goodwin L.A."/>
            <person name="Han J."/>
            <person name="Woyke T."/>
            <person name="Pitluck S."/>
            <person name="Pennacchio L."/>
            <person name="Nolan M."/>
            <person name="Mikhailova N."/>
            <person name="Lykidis A."/>
            <person name="Land M.L."/>
            <person name="Brettin T."/>
            <person name="Stetter K.O."/>
            <person name="Nelson K.E."/>
            <person name="Gogarten J.P."/>
            <person name="Noll K.M."/>
        </authorList>
    </citation>
    <scope>NUCLEOTIDE SEQUENCE [LARGE SCALE GENOMIC DNA]</scope>
    <source>
        <strain>RQ2</strain>
    </source>
</reference>
<evidence type="ECO:0000255" key="1">
    <source>
        <dbReference type="HAMAP-Rule" id="MF_00377"/>
    </source>
</evidence>
<gene>
    <name evidence="1" type="primary">dnaA</name>
    <name type="ordered locus">TRQ2_0001</name>
</gene>
<dbReference type="EMBL" id="CP000969">
    <property type="protein sequence ID" value="ACB08363.1"/>
    <property type="molecule type" value="Genomic_DNA"/>
</dbReference>
<dbReference type="RefSeq" id="WP_012310261.1">
    <property type="nucleotide sequence ID" value="NC_010483.1"/>
</dbReference>
<dbReference type="SMR" id="B1LC08"/>
<dbReference type="KEGG" id="trq:TRQ2_0001"/>
<dbReference type="HOGENOM" id="CLU_026910_3_2_0"/>
<dbReference type="Proteomes" id="UP000001687">
    <property type="component" value="Chromosome"/>
</dbReference>
<dbReference type="GO" id="GO:0005737">
    <property type="term" value="C:cytoplasm"/>
    <property type="evidence" value="ECO:0007669"/>
    <property type="project" value="UniProtKB-SubCell"/>
</dbReference>
<dbReference type="GO" id="GO:0005886">
    <property type="term" value="C:plasma membrane"/>
    <property type="evidence" value="ECO:0007669"/>
    <property type="project" value="TreeGrafter"/>
</dbReference>
<dbReference type="GO" id="GO:0005524">
    <property type="term" value="F:ATP binding"/>
    <property type="evidence" value="ECO:0007669"/>
    <property type="project" value="UniProtKB-UniRule"/>
</dbReference>
<dbReference type="GO" id="GO:0016887">
    <property type="term" value="F:ATP hydrolysis activity"/>
    <property type="evidence" value="ECO:0007669"/>
    <property type="project" value="InterPro"/>
</dbReference>
<dbReference type="GO" id="GO:0003688">
    <property type="term" value="F:DNA replication origin binding"/>
    <property type="evidence" value="ECO:0007669"/>
    <property type="project" value="UniProtKB-UniRule"/>
</dbReference>
<dbReference type="GO" id="GO:0008289">
    <property type="term" value="F:lipid binding"/>
    <property type="evidence" value="ECO:0007669"/>
    <property type="project" value="UniProtKB-KW"/>
</dbReference>
<dbReference type="GO" id="GO:0006270">
    <property type="term" value="P:DNA replication initiation"/>
    <property type="evidence" value="ECO:0007669"/>
    <property type="project" value="UniProtKB-UniRule"/>
</dbReference>
<dbReference type="GO" id="GO:0006275">
    <property type="term" value="P:regulation of DNA replication"/>
    <property type="evidence" value="ECO:0007669"/>
    <property type="project" value="UniProtKB-UniRule"/>
</dbReference>
<dbReference type="CDD" id="cd00009">
    <property type="entry name" value="AAA"/>
    <property type="match status" value="1"/>
</dbReference>
<dbReference type="CDD" id="cd06571">
    <property type="entry name" value="Bac_DnaA_C"/>
    <property type="match status" value="1"/>
</dbReference>
<dbReference type="FunFam" id="3.40.50.300:FF:000668">
    <property type="entry name" value="Chromosomal replication initiator protein DnaA"/>
    <property type="match status" value="1"/>
</dbReference>
<dbReference type="Gene3D" id="1.10.1750.10">
    <property type="match status" value="1"/>
</dbReference>
<dbReference type="Gene3D" id="1.10.8.60">
    <property type="match status" value="1"/>
</dbReference>
<dbReference type="Gene3D" id="3.30.300.180">
    <property type="match status" value="1"/>
</dbReference>
<dbReference type="Gene3D" id="3.40.50.300">
    <property type="entry name" value="P-loop containing nucleotide triphosphate hydrolases"/>
    <property type="match status" value="1"/>
</dbReference>
<dbReference type="HAMAP" id="MF_00377">
    <property type="entry name" value="DnaA_bact"/>
    <property type="match status" value="1"/>
</dbReference>
<dbReference type="InterPro" id="IPR003593">
    <property type="entry name" value="AAA+_ATPase"/>
</dbReference>
<dbReference type="InterPro" id="IPR001957">
    <property type="entry name" value="Chromosome_initiator_DnaA"/>
</dbReference>
<dbReference type="InterPro" id="IPR020591">
    <property type="entry name" value="Chromosome_initiator_DnaA-like"/>
</dbReference>
<dbReference type="InterPro" id="IPR018312">
    <property type="entry name" value="Chromosome_initiator_DnaA_CS"/>
</dbReference>
<dbReference type="InterPro" id="IPR013159">
    <property type="entry name" value="DnaA_C"/>
</dbReference>
<dbReference type="InterPro" id="IPR013317">
    <property type="entry name" value="DnaA_dom"/>
</dbReference>
<dbReference type="InterPro" id="IPR024633">
    <property type="entry name" value="DnaA_N_dom"/>
</dbReference>
<dbReference type="InterPro" id="IPR038454">
    <property type="entry name" value="DnaA_N_sf"/>
</dbReference>
<dbReference type="InterPro" id="IPR027417">
    <property type="entry name" value="P-loop_NTPase"/>
</dbReference>
<dbReference type="InterPro" id="IPR010921">
    <property type="entry name" value="Trp_repressor/repl_initiator"/>
</dbReference>
<dbReference type="NCBIfam" id="TIGR00362">
    <property type="entry name" value="DnaA"/>
    <property type="match status" value="1"/>
</dbReference>
<dbReference type="PANTHER" id="PTHR30050">
    <property type="entry name" value="CHROMOSOMAL REPLICATION INITIATOR PROTEIN DNAA"/>
    <property type="match status" value="1"/>
</dbReference>
<dbReference type="PANTHER" id="PTHR30050:SF2">
    <property type="entry name" value="CHROMOSOMAL REPLICATION INITIATOR PROTEIN DNAA"/>
    <property type="match status" value="1"/>
</dbReference>
<dbReference type="Pfam" id="PF00308">
    <property type="entry name" value="Bac_DnaA"/>
    <property type="match status" value="1"/>
</dbReference>
<dbReference type="Pfam" id="PF08299">
    <property type="entry name" value="Bac_DnaA_C"/>
    <property type="match status" value="1"/>
</dbReference>
<dbReference type="Pfam" id="PF11638">
    <property type="entry name" value="DnaA_N"/>
    <property type="match status" value="1"/>
</dbReference>
<dbReference type="PRINTS" id="PR00051">
    <property type="entry name" value="DNAA"/>
</dbReference>
<dbReference type="SMART" id="SM00382">
    <property type="entry name" value="AAA"/>
    <property type="match status" value="1"/>
</dbReference>
<dbReference type="SMART" id="SM00760">
    <property type="entry name" value="Bac_DnaA_C"/>
    <property type="match status" value="1"/>
</dbReference>
<dbReference type="SUPFAM" id="SSF52540">
    <property type="entry name" value="P-loop containing nucleoside triphosphate hydrolases"/>
    <property type="match status" value="1"/>
</dbReference>
<dbReference type="SUPFAM" id="SSF48295">
    <property type="entry name" value="TrpR-like"/>
    <property type="match status" value="1"/>
</dbReference>
<dbReference type="PROSITE" id="PS01008">
    <property type="entry name" value="DNAA"/>
    <property type="match status" value="1"/>
</dbReference>
<proteinExistence type="inferred from homology"/>
<feature type="chain" id="PRO_1000122031" description="Chromosomal replication initiator protein DnaA">
    <location>
        <begin position="1"/>
        <end position="440"/>
    </location>
</feature>
<feature type="region of interest" description="Domain I, interacts with DnaA modulators" evidence="1">
    <location>
        <begin position="1"/>
        <end position="69"/>
    </location>
</feature>
<feature type="region of interest" description="Domain II" evidence="1">
    <location>
        <begin position="69"/>
        <end position="96"/>
    </location>
</feature>
<feature type="region of interest" description="Domain III, AAA+ region" evidence="1">
    <location>
        <begin position="97"/>
        <end position="313"/>
    </location>
</feature>
<feature type="region of interest" description="Domain IV, binds dsDNA" evidence="1">
    <location>
        <begin position="314"/>
        <end position="440"/>
    </location>
</feature>
<feature type="binding site" evidence="1">
    <location>
        <position position="140"/>
    </location>
    <ligand>
        <name>ATP</name>
        <dbReference type="ChEBI" id="CHEBI:30616"/>
    </ligand>
</feature>
<feature type="binding site" evidence="1">
    <location>
        <position position="142"/>
    </location>
    <ligand>
        <name>ATP</name>
        <dbReference type="ChEBI" id="CHEBI:30616"/>
    </ligand>
</feature>
<feature type="binding site" evidence="1">
    <location>
        <position position="143"/>
    </location>
    <ligand>
        <name>ATP</name>
        <dbReference type="ChEBI" id="CHEBI:30616"/>
    </ligand>
</feature>
<feature type="binding site" evidence="1">
    <location>
        <position position="144"/>
    </location>
    <ligand>
        <name>ATP</name>
        <dbReference type="ChEBI" id="CHEBI:30616"/>
    </ligand>
</feature>
<accession>B1LC08</accession>
<keyword id="KW-0067">ATP-binding</keyword>
<keyword id="KW-0963">Cytoplasm</keyword>
<keyword id="KW-0235">DNA replication</keyword>
<keyword id="KW-0238">DNA-binding</keyword>
<keyword id="KW-0446">Lipid-binding</keyword>
<keyword id="KW-0547">Nucleotide-binding</keyword>
<comment type="function">
    <text evidence="1">Plays an essential role in the initiation and regulation of chromosomal replication. ATP-DnaA binds to the origin of replication (oriC) to initiate formation of the DNA replication initiation complex once per cell cycle. Binds the DnaA box (a 9 base pair repeat at the origin) and separates the double-stranded (ds)DNA. Forms a right-handed helical filament on oriC DNA; dsDNA binds to the exterior of the filament while single-stranded (ss)DNA is stabiized in the filament's interior. The ATP-DnaA-oriC complex binds and stabilizes one strand of the AT-rich DNA unwinding element (DUE), permitting loading of DNA polymerase. After initiation quickly degrades to an ADP-DnaA complex that is not apt for DNA replication. Binds acidic phospholipids.</text>
</comment>
<comment type="subunit">
    <text evidence="1">Oligomerizes as a right-handed, spiral filament on DNA at oriC.</text>
</comment>
<comment type="subcellular location">
    <subcellularLocation>
        <location evidence="1">Cytoplasm</location>
    </subcellularLocation>
</comment>
<comment type="domain">
    <text evidence="1">Domain I is involved in oligomerization and binding regulators, domain II is flexibile and of varying length in different bacteria, domain III forms the AAA+ region, while domain IV binds dsDNA.</text>
</comment>
<comment type="similarity">
    <text evidence="1">Belongs to the DnaA family.</text>
</comment>
<organism>
    <name type="scientific">Thermotoga sp. (strain RQ2)</name>
    <dbReference type="NCBI Taxonomy" id="126740"/>
    <lineage>
        <taxon>Bacteria</taxon>
        <taxon>Thermotogati</taxon>
        <taxon>Thermotogota</taxon>
        <taxon>Thermotogae</taxon>
        <taxon>Thermotogales</taxon>
        <taxon>Thermotogaceae</taxon>
        <taxon>Thermotoga</taxon>
    </lineage>
</organism>
<protein>
    <recommendedName>
        <fullName evidence="1">Chromosomal replication initiator protein DnaA</fullName>
    </recommendedName>
</protein>
<sequence length="440" mass="50256">MKERILQEIKTRVNRKSWELWFSSFDVKSIEGNKVVFSVGNLFIKEWLEKKYYSVLSKAVKVVLGNDATFEITYEAFEPHSSYSEPLVKKRAVLLTPLNPDYTFENFVVGPGNSFAYHAALEVAKHPGRYNPLFIYGGVGLGKTHLLQSIGNYVVQNEPDLRVMYITSEKFLNDLVDSMKEGKLNEFREKYRKKVDILLIDDVQFLIGKTGVQTELFHTFNELHDSGKQIVICSDREPQKLSEFQDRLVSRFQMGLVAKLEPPDEETRKSIARKMLEIEHGELPEEVLNFVAENVDDNLRRLRGAIIKLLVYKETTGKEVDLKEAILLLKDFIKSNRVKAMDPIDELIEIVAKVTGASREEILSNSRNVKALTARRIGMYVAKNYLKSSLRTIAEKFNRSHPVVVDSVKKVKDSLLKGNKQLKALIDEVIGEISRRALSG</sequence>